<dbReference type="EC" id="2.4.2.21" evidence="1"/>
<dbReference type="EMBL" id="AM039952">
    <property type="protein sequence ID" value="CAJ25046.1"/>
    <property type="molecule type" value="Genomic_DNA"/>
</dbReference>
<dbReference type="RefSeq" id="WP_011348306.1">
    <property type="nucleotide sequence ID" value="NZ_CP017190.1"/>
</dbReference>
<dbReference type="SMR" id="Q3BQB7"/>
<dbReference type="STRING" id="456327.BJD11_06195"/>
<dbReference type="KEGG" id="xcv:XCV3315"/>
<dbReference type="eggNOG" id="COG2038">
    <property type="taxonomic scope" value="Bacteria"/>
</dbReference>
<dbReference type="HOGENOM" id="CLU_002982_0_1_6"/>
<dbReference type="UniPathway" id="UPA00061">
    <property type="reaction ID" value="UER00516"/>
</dbReference>
<dbReference type="Proteomes" id="UP000007069">
    <property type="component" value="Chromosome"/>
</dbReference>
<dbReference type="GO" id="GO:0008939">
    <property type="term" value="F:nicotinate-nucleotide-dimethylbenzimidazole phosphoribosyltransferase activity"/>
    <property type="evidence" value="ECO:0007669"/>
    <property type="project" value="UniProtKB-UniRule"/>
</dbReference>
<dbReference type="GO" id="GO:0009236">
    <property type="term" value="P:cobalamin biosynthetic process"/>
    <property type="evidence" value="ECO:0007669"/>
    <property type="project" value="UniProtKB-KW"/>
</dbReference>
<dbReference type="CDD" id="cd02439">
    <property type="entry name" value="DMB-PRT_CobT"/>
    <property type="match status" value="1"/>
</dbReference>
<dbReference type="FunFam" id="3.40.50.10210:FF:000001">
    <property type="entry name" value="Nicotinate-nucleotide--dimethylbenzimidazole phosphoribosyltransferase"/>
    <property type="match status" value="1"/>
</dbReference>
<dbReference type="Gene3D" id="1.10.1610.10">
    <property type="match status" value="1"/>
</dbReference>
<dbReference type="Gene3D" id="3.40.50.10210">
    <property type="match status" value="1"/>
</dbReference>
<dbReference type="HAMAP" id="MF_00230">
    <property type="entry name" value="CobT"/>
    <property type="match status" value="1"/>
</dbReference>
<dbReference type="InterPro" id="IPR003200">
    <property type="entry name" value="Nict_dMeBzImd_PRibTrfase"/>
</dbReference>
<dbReference type="InterPro" id="IPR017846">
    <property type="entry name" value="Nict_dMeBzImd_PRibTrfase_bact"/>
</dbReference>
<dbReference type="InterPro" id="IPR023195">
    <property type="entry name" value="Nict_dMeBzImd_PRibTrfase_N"/>
</dbReference>
<dbReference type="InterPro" id="IPR036087">
    <property type="entry name" value="Nict_dMeBzImd_PRibTrfase_sf"/>
</dbReference>
<dbReference type="NCBIfam" id="TIGR03160">
    <property type="entry name" value="cobT_DBIPRT"/>
    <property type="match status" value="1"/>
</dbReference>
<dbReference type="NCBIfam" id="NF000996">
    <property type="entry name" value="PRK00105.1"/>
    <property type="match status" value="1"/>
</dbReference>
<dbReference type="PANTHER" id="PTHR43463">
    <property type="entry name" value="NICOTINATE-NUCLEOTIDE--DIMETHYLBENZIMIDAZOLE PHOSPHORIBOSYLTRANSFERASE"/>
    <property type="match status" value="1"/>
</dbReference>
<dbReference type="PANTHER" id="PTHR43463:SF1">
    <property type="entry name" value="NICOTINATE-NUCLEOTIDE--DIMETHYLBENZIMIDAZOLE PHOSPHORIBOSYLTRANSFERASE"/>
    <property type="match status" value="1"/>
</dbReference>
<dbReference type="Pfam" id="PF02277">
    <property type="entry name" value="DBI_PRT"/>
    <property type="match status" value="1"/>
</dbReference>
<dbReference type="SUPFAM" id="SSF52733">
    <property type="entry name" value="Nicotinate mononucleotide:5,6-dimethylbenzimidazole phosphoribosyltransferase (CobT)"/>
    <property type="match status" value="1"/>
</dbReference>
<reference key="1">
    <citation type="journal article" date="2005" name="J. Bacteriol.">
        <title>Insights into genome plasticity and pathogenicity of the plant pathogenic Bacterium Xanthomonas campestris pv. vesicatoria revealed by the complete genome sequence.</title>
        <authorList>
            <person name="Thieme F."/>
            <person name="Koebnik R."/>
            <person name="Bekel T."/>
            <person name="Berger C."/>
            <person name="Boch J."/>
            <person name="Buettner D."/>
            <person name="Caldana C."/>
            <person name="Gaigalat L."/>
            <person name="Goesmann A."/>
            <person name="Kay S."/>
            <person name="Kirchner O."/>
            <person name="Lanz C."/>
            <person name="Linke B."/>
            <person name="McHardy A.C."/>
            <person name="Meyer F."/>
            <person name="Mittenhuber G."/>
            <person name="Nies D.H."/>
            <person name="Niesbach-Kloesgen U."/>
            <person name="Patschkowski T."/>
            <person name="Rueckert C."/>
            <person name="Rupp O."/>
            <person name="Schneiker S."/>
            <person name="Schuster S.C."/>
            <person name="Vorhoelter F.J."/>
            <person name="Weber E."/>
            <person name="Puehler A."/>
            <person name="Bonas U."/>
            <person name="Bartels D."/>
            <person name="Kaiser O."/>
        </authorList>
    </citation>
    <scope>NUCLEOTIDE SEQUENCE [LARGE SCALE GENOMIC DNA]</scope>
    <source>
        <strain>85-10</strain>
    </source>
</reference>
<organism>
    <name type="scientific">Xanthomonas euvesicatoria pv. vesicatoria (strain 85-10)</name>
    <name type="common">Xanthomonas campestris pv. vesicatoria</name>
    <dbReference type="NCBI Taxonomy" id="316273"/>
    <lineage>
        <taxon>Bacteria</taxon>
        <taxon>Pseudomonadati</taxon>
        <taxon>Pseudomonadota</taxon>
        <taxon>Gammaproteobacteria</taxon>
        <taxon>Lysobacterales</taxon>
        <taxon>Lysobacteraceae</taxon>
        <taxon>Xanthomonas</taxon>
    </lineage>
</organism>
<name>COBT_XANE5</name>
<sequence length="348" mass="35967">MSSDWIFGACAVPDARMRSAALARQEQLTKPPGALGRLEHLAVRLAAWQRTDRPGVQRVWIAVYAADHGVAAEGVSAFPQAVTGEMVRNFARGGAAIAVLARELGARLEVVNLGVVNDPGDLPRVRRAWIAPSSANICEQPAMTATQLRDALAAGADSIAQAKSCDTQLFVGGEMGIGNTTAAAALGCALLSQFPQAMAGAGTGLDAEGIAHKATVITRALALHADASSPLERLRRLGGFEIAALVGAYIAAAQAGIPVLVDGFITTAAALVATRLNPGVREWLLFGHRSQERGHAALLRAMDAEPLLQLDLRLGEASGAAVAIPLLRSACALHNGMATFAEAGVSDA</sequence>
<evidence type="ECO:0000255" key="1">
    <source>
        <dbReference type="HAMAP-Rule" id="MF_00230"/>
    </source>
</evidence>
<comment type="function">
    <text evidence="1">Catalyzes the synthesis of alpha-ribazole-5'-phosphate from nicotinate mononucleotide (NAMN) and 5,6-dimethylbenzimidazole (DMB).</text>
</comment>
<comment type="catalytic activity">
    <reaction evidence="1">
        <text>5,6-dimethylbenzimidazole + nicotinate beta-D-ribonucleotide = alpha-ribazole 5'-phosphate + nicotinate + H(+)</text>
        <dbReference type="Rhea" id="RHEA:11196"/>
        <dbReference type="ChEBI" id="CHEBI:15378"/>
        <dbReference type="ChEBI" id="CHEBI:15890"/>
        <dbReference type="ChEBI" id="CHEBI:32544"/>
        <dbReference type="ChEBI" id="CHEBI:57502"/>
        <dbReference type="ChEBI" id="CHEBI:57918"/>
        <dbReference type="EC" id="2.4.2.21"/>
    </reaction>
</comment>
<comment type="pathway">
    <text evidence="1">Nucleoside biosynthesis; alpha-ribazole biosynthesis; alpha-ribazole from 5,6-dimethylbenzimidazole: step 1/2.</text>
</comment>
<comment type="similarity">
    <text evidence="1">Belongs to the CobT family.</text>
</comment>
<accession>Q3BQB7</accession>
<keyword id="KW-0169">Cobalamin biosynthesis</keyword>
<keyword id="KW-0328">Glycosyltransferase</keyword>
<keyword id="KW-0808">Transferase</keyword>
<feature type="chain" id="PRO_1000021640" description="Nicotinate-nucleotide--dimethylbenzimidazole phosphoribosyltransferase">
    <location>
        <begin position="1"/>
        <end position="348"/>
    </location>
</feature>
<feature type="active site" description="Proton acceptor" evidence="1">
    <location>
        <position position="316"/>
    </location>
</feature>
<gene>
    <name evidence="1" type="primary">cobT</name>
    <name type="ordered locus">XCV3315</name>
</gene>
<protein>
    <recommendedName>
        <fullName evidence="1">Nicotinate-nucleotide--dimethylbenzimidazole phosphoribosyltransferase</fullName>
        <shortName evidence="1">NN:DBI PRT</shortName>
        <ecNumber evidence="1">2.4.2.21</ecNumber>
    </recommendedName>
    <alternativeName>
        <fullName evidence="1">N(1)-alpha-phosphoribosyltransferase</fullName>
    </alternativeName>
</protein>
<proteinExistence type="inferred from homology"/>